<feature type="chain" id="PRO_1000164323" description="tRNA(Ile)-lysidine synthase">
    <location>
        <begin position="1"/>
        <end position="326"/>
    </location>
</feature>
<feature type="binding site" evidence="1">
    <location>
        <begin position="25"/>
        <end position="30"/>
    </location>
    <ligand>
        <name>ATP</name>
        <dbReference type="ChEBI" id="CHEBI:30616"/>
    </ligand>
</feature>
<accession>A2C5B5</accession>
<reference key="1">
    <citation type="journal article" date="2007" name="PLoS Genet.">
        <title>Patterns and implications of gene gain and loss in the evolution of Prochlorococcus.</title>
        <authorList>
            <person name="Kettler G.C."/>
            <person name="Martiny A.C."/>
            <person name="Huang K."/>
            <person name="Zucker J."/>
            <person name="Coleman M.L."/>
            <person name="Rodrigue S."/>
            <person name="Chen F."/>
            <person name="Lapidus A."/>
            <person name="Ferriera S."/>
            <person name="Johnson J."/>
            <person name="Steglich C."/>
            <person name="Church G.M."/>
            <person name="Richardson P."/>
            <person name="Chisholm S.W."/>
        </authorList>
    </citation>
    <scope>NUCLEOTIDE SEQUENCE [LARGE SCALE GENOMIC DNA]</scope>
    <source>
        <strain>NATL1A</strain>
    </source>
</reference>
<organism>
    <name type="scientific">Prochlorococcus marinus (strain NATL1A)</name>
    <dbReference type="NCBI Taxonomy" id="167555"/>
    <lineage>
        <taxon>Bacteria</taxon>
        <taxon>Bacillati</taxon>
        <taxon>Cyanobacteriota</taxon>
        <taxon>Cyanophyceae</taxon>
        <taxon>Synechococcales</taxon>
        <taxon>Prochlorococcaceae</taxon>
        <taxon>Prochlorococcus</taxon>
    </lineage>
</organism>
<sequence>MRLHKRLKQNKSLLPSNSTILLAISGGQDSMALLKLIIDLKRLHKWQVEIWHGNHQWHSKSEKTEEELKLWCLKNQISFHSNKADKKEVANEEKARDWRYKNLIMKAKFLSSKNIHFPCTRILTGHTATDRAETVIMNLARGTDLTGLTTLKEQRTIESNIDLTRPLLIFNRNETLEICKDFNLPIWIDPSNENINLTRNKIRKEILPILNSIYKGADSRIASVANRLESYNEDQKLFAKIAIQFCQGEKINSLSRIKLFGLTNSIRQIILSNWLKTMGVKRITALQIEEINTKVSQRKPPGSIHLHGDFLIRWNKEAIYISNKTN</sequence>
<proteinExistence type="inferred from homology"/>
<dbReference type="EC" id="6.3.4.19" evidence="1"/>
<dbReference type="EMBL" id="CP000553">
    <property type="protein sequence ID" value="ABM76675.1"/>
    <property type="molecule type" value="Genomic_DNA"/>
</dbReference>
<dbReference type="RefSeq" id="WP_011824619.1">
    <property type="nucleotide sequence ID" value="NC_008819.1"/>
</dbReference>
<dbReference type="SMR" id="A2C5B5"/>
<dbReference type="KEGG" id="pme:NATL1_21191"/>
<dbReference type="eggNOG" id="COG0037">
    <property type="taxonomic scope" value="Bacteria"/>
</dbReference>
<dbReference type="HOGENOM" id="CLU_018869_0_0_3"/>
<dbReference type="Proteomes" id="UP000002592">
    <property type="component" value="Chromosome"/>
</dbReference>
<dbReference type="GO" id="GO:0005737">
    <property type="term" value="C:cytoplasm"/>
    <property type="evidence" value="ECO:0007669"/>
    <property type="project" value="UniProtKB-SubCell"/>
</dbReference>
<dbReference type="GO" id="GO:0005524">
    <property type="term" value="F:ATP binding"/>
    <property type="evidence" value="ECO:0007669"/>
    <property type="project" value="UniProtKB-UniRule"/>
</dbReference>
<dbReference type="GO" id="GO:0032267">
    <property type="term" value="F:tRNA(Ile)-lysidine synthase activity"/>
    <property type="evidence" value="ECO:0007669"/>
    <property type="project" value="UniProtKB-EC"/>
</dbReference>
<dbReference type="GO" id="GO:0006400">
    <property type="term" value="P:tRNA modification"/>
    <property type="evidence" value="ECO:0007669"/>
    <property type="project" value="UniProtKB-UniRule"/>
</dbReference>
<dbReference type="CDD" id="cd01992">
    <property type="entry name" value="TilS_N"/>
    <property type="match status" value="1"/>
</dbReference>
<dbReference type="Gene3D" id="3.40.50.620">
    <property type="entry name" value="HUPs"/>
    <property type="match status" value="1"/>
</dbReference>
<dbReference type="HAMAP" id="MF_01161">
    <property type="entry name" value="tRNA_Ile_lys_synt"/>
    <property type="match status" value="1"/>
</dbReference>
<dbReference type="InterPro" id="IPR014729">
    <property type="entry name" value="Rossmann-like_a/b/a_fold"/>
</dbReference>
<dbReference type="InterPro" id="IPR011063">
    <property type="entry name" value="TilS/TtcA_N"/>
</dbReference>
<dbReference type="InterPro" id="IPR012094">
    <property type="entry name" value="tRNA_Ile_lys_synt"/>
</dbReference>
<dbReference type="InterPro" id="IPR012795">
    <property type="entry name" value="tRNA_Ile_lys_synt_N"/>
</dbReference>
<dbReference type="NCBIfam" id="TIGR02432">
    <property type="entry name" value="lysidine_TilS_N"/>
    <property type="match status" value="1"/>
</dbReference>
<dbReference type="PANTHER" id="PTHR43033">
    <property type="entry name" value="TRNA(ILE)-LYSIDINE SYNTHASE-RELATED"/>
    <property type="match status" value="1"/>
</dbReference>
<dbReference type="PANTHER" id="PTHR43033:SF1">
    <property type="entry name" value="TRNA(ILE)-LYSIDINE SYNTHASE-RELATED"/>
    <property type="match status" value="1"/>
</dbReference>
<dbReference type="Pfam" id="PF01171">
    <property type="entry name" value="ATP_bind_3"/>
    <property type="match status" value="1"/>
</dbReference>
<dbReference type="SUPFAM" id="SSF52402">
    <property type="entry name" value="Adenine nucleotide alpha hydrolases-like"/>
    <property type="match status" value="1"/>
</dbReference>
<comment type="function">
    <text evidence="1">Ligates lysine onto the cytidine present at position 34 of the AUA codon-specific tRNA(Ile) that contains the anticodon CAU, in an ATP-dependent manner. Cytidine is converted to lysidine, thus changing the amino acid specificity of the tRNA from methionine to isoleucine.</text>
</comment>
<comment type="catalytic activity">
    <reaction evidence="1">
        <text>cytidine(34) in tRNA(Ile2) + L-lysine + ATP = lysidine(34) in tRNA(Ile2) + AMP + diphosphate + H(+)</text>
        <dbReference type="Rhea" id="RHEA:43744"/>
        <dbReference type="Rhea" id="RHEA-COMP:10625"/>
        <dbReference type="Rhea" id="RHEA-COMP:10670"/>
        <dbReference type="ChEBI" id="CHEBI:15378"/>
        <dbReference type="ChEBI" id="CHEBI:30616"/>
        <dbReference type="ChEBI" id="CHEBI:32551"/>
        <dbReference type="ChEBI" id="CHEBI:33019"/>
        <dbReference type="ChEBI" id="CHEBI:82748"/>
        <dbReference type="ChEBI" id="CHEBI:83665"/>
        <dbReference type="ChEBI" id="CHEBI:456215"/>
        <dbReference type="EC" id="6.3.4.19"/>
    </reaction>
</comment>
<comment type="subcellular location">
    <subcellularLocation>
        <location evidence="1">Cytoplasm</location>
    </subcellularLocation>
</comment>
<comment type="domain">
    <text>The N-terminal region contains the highly conserved SGGXDS motif, predicted to be a P-loop motif involved in ATP binding.</text>
</comment>
<comment type="similarity">
    <text evidence="1">Belongs to the tRNA(Ile)-lysidine synthase family.</text>
</comment>
<evidence type="ECO:0000255" key="1">
    <source>
        <dbReference type="HAMAP-Rule" id="MF_01161"/>
    </source>
</evidence>
<name>TILS_PROM1</name>
<protein>
    <recommendedName>
        <fullName evidence="1">tRNA(Ile)-lysidine synthase</fullName>
        <ecNumber evidence="1">6.3.4.19</ecNumber>
    </recommendedName>
    <alternativeName>
        <fullName evidence="1">tRNA(Ile)-2-lysyl-cytidine synthase</fullName>
    </alternativeName>
    <alternativeName>
        <fullName evidence="1">tRNA(Ile)-lysidine synthetase</fullName>
    </alternativeName>
</protein>
<keyword id="KW-0067">ATP-binding</keyword>
<keyword id="KW-0963">Cytoplasm</keyword>
<keyword id="KW-0436">Ligase</keyword>
<keyword id="KW-0547">Nucleotide-binding</keyword>
<keyword id="KW-0819">tRNA processing</keyword>
<gene>
    <name evidence="1" type="primary">tilS</name>
    <name type="ordered locus">NATL1_21191</name>
</gene>